<sequence length="618" mass="64618">MVSPRMSGLLSQTVILALIFLPQTRPAGVFELQIHSFGPGPGPGAPRSPCSARLPCRLFFRVCLKPGLSEEAAESPCALGAALSARGPVYTEQPGAPAPDLPLPDGLLQVPFRDAWPGTFSFIIETWREELGDQIGGPAWSLLARVAGRRRLAAGGPWARDIQRAGAWELRFSYRARCEPPAVGTACTRLCRPRSAPSRCGPGLRPCAPLEDECEAPLVCRAGCSPEHGFCEQPGECRCLEGWTGPLCTVPVSTSSCLSPRGPSSATTGCLVPGPGPCDGNPCANGGSCSETPRSFECTCPRGFYGLRCEVSGVTCADGPCFNGGLCVGGADPDSAYICHCPPGFQGSNCEKRVDRCSLQPCRNGGLCLDLGHALRCRCRAGFAGPRCEHDLDDCAGRACANGGTCVEGGGAHRCSCALGFGGRDCRERADPCAARPCAHGGRCYAHFSGLVCACAPGYMGARCEFPVHPDGASALPAAPPGLRPGDPQRYLLPPALGLLVAAGVAGAALLLVHVRRRGHSQDAGSRLLAGTPEPSVHALPDALNNLRTQEGSGDGPSSSVDWNRPEDVDPQGIYVISAPSIYAREVATPLFPPLHTGRAGQRQHLLFPYPSSILSVK</sequence>
<feature type="signal peptide" evidence="2">
    <location>
        <begin position="1"/>
        <end position="26"/>
    </location>
</feature>
<feature type="chain" id="PRO_0000007509" description="Delta-like protein 3">
    <location>
        <begin position="27"/>
        <end position="618"/>
    </location>
</feature>
<feature type="topological domain" description="Extracellular" evidence="2">
    <location>
        <begin position="27"/>
        <end position="492"/>
    </location>
</feature>
<feature type="transmembrane region" description="Helical" evidence="2">
    <location>
        <begin position="493"/>
        <end position="513"/>
    </location>
</feature>
<feature type="topological domain" description="Cytoplasmic" evidence="2">
    <location>
        <begin position="514"/>
        <end position="618"/>
    </location>
</feature>
<feature type="domain" description="DSL">
    <location>
        <begin position="176"/>
        <end position="215"/>
    </location>
</feature>
<feature type="domain" description="EGF-like 1" evidence="3">
    <location>
        <begin position="216"/>
        <end position="249"/>
    </location>
</feature>
<feature type="domain" description="EGF-like 2" evidence="3">
    <location>
        <begin position="274"/>
        <end position="310"/>
    </location>
</feature>
<feature type="domain" description="EGF-like 3" evidence="3">
    <location>
        <begin position="312"/>
        <end position="351"/>
    </location>
</feature>
<feature type="domain" description="EGF-like 4" evidence="3">
    <location>
        <begin position="353"/>
        <end position="389"/>
    </location>
</feature>
<feature type="domain" description="EGF-like 5" evidence="3">
    <location>
        <begin position="391"/>
        <end position="427"/>
    </location>
</feature>
<feature type="domain" description="EGF-like 6" evidence="3">
    <location>
        <begin position="429"/>
        <end position="465"/>
    </location>
</feature>
<feature type="region of interest" description="Disordered" evidence="4">
    <location>
        <begin position="546"/>
        <end position="566"/>
    </location>
</feature>
<feature type="compositionally biased region" description="Polar residues" evidence="4">
    <location>
        <begin position="546"/>
        <end position="562"/>
    </location>
</feature>
<feature type="disulfide bond" evidence="3">
    <location>
        <begin position="220"/>
        <end position="231"/>
    </location>
</feature>
<feature type="disulfide bond" evidence="3">
    <location>
        <begin position="224"/>
        <end position="237"/>
    </location>
</feature>
<feature type="disulfide bond" evidence="3">
    <location>
        <begin position="239"/>
        <end position="248"/>
    </location>
</feature>
<feature type="disulfide bond" evidence="3">
    <location>
        <begin position="278"/>
        <end position="289"/>
    </location>
</feature>
<feature type="disulfide bond" evidence="3">
    <location>
        <begin position="283"/>
        <end position="298"/>
    </location>
</feature>
<feature type="disulfide bond" evidence="3">
    <location>
        <begin position="300"/>
        <end position="309"/>
    </location>
</feature>
<feature type="disulfide bond" evidence="3">
    <location>
        <begin position="316"/>
        <end position="327"/>
    </location>
</feature>
<feature type="disulfide bond" evidence="3">
    <location>
        <begin position="321"/>
        <end position="339"/>
    </location>
</feature>
<feature type="disulfide bond" evidence="3">
    <location>
        <begin position="341"/>
        <end position="350"/>
    </location>
</feature>
<feature type="disulfide bond" evidence="3">
    <location>
        <begin position="357"/>
        <end position="368"/>
    </location>
</feature>
<feature type="disulfide bond" evidence="3">
    <location>
        <begin position="362"/>
        <end position="377"/>
    </location>
</feature>
<feature type="disulfide bond" evidence="3">
    <location>
        <begin position="379"/>
        <end position="388"/>
    </location>
</feature>
<feature type="disulfide bond" evidence="3">
    <location>
        <begin position="395"/>
        <end position="406"/>
    </location>
</feature>
<feature type="disulfide bond" evidence="3">
    <location>
        <begin position="400"/>
        <end position="415"/>
    </location>
</feature>
<feature type="disulfide bond" evidence="3">
    <location>
        <begin position="417"/>
        <end position="426"/>
    </location>
</feature>
<feature type="disulfide bond" evidence="3">
    <location>
        <begin position="433"/>
        <end position="444"/>
    </location>
</feature>
<feature type="disulfide bond" evidence="3">
    <location>
        <begin position="438"/>
        <end position="453"/>
    </location>
</feature>
<feature type="disulfide bond" evidence="3">
    <location>
        <begin position="455"/>
        <end position="464"/>
    </location>
</feature>
<feature type="splice variant" id="VSP_045249" description="In isoform 2." evidence="8">
    <original>VATPLFPPLHTGRAGQRQHLLFPYPSSILSVK</original>
    <variation>A</variation>
    <location>
        <begin position="587"/>
        <end position="618"/>
    </location>
</feature>
<feature type="sequence variant" id="VAR_046782" description="In dbSNP:rs71647811." evidence="7">
    <original>A</original>
    <variation>T</variation>
    <location>
        <position position="115"/>
    </location>
</feature>
<feature type="sequence variant" id="VAR_046783" description="In dbSNP:rs55741253." evidence="7">
    <original>L</original>
    <variation>Q</variation>
    <location>
        <position position="142"/>
    </location>
</feature>
<feature type="sequence variant" id="VAR_046784" description="In dbSNP:rs8107127." evidence="6 7">
    <original>F</original>
    <variation>C</variation>
    <location>
        <position position="172"/>
    </location>
</feature>
<feature type="sequence variant" id="VAR_016776" description="In dbSNP:rs1110627." evidence="6 7">
    <original>L</original>
    <variation>P</variation>
    <location>
        <position position="218"/>
    </location>
</feature>
<feature type="sequence variant" id="VAR_009952" description="In SCDO1; dbSNP:rs104894674." evidence="5">
    <original>G</original>
    <variation>D</variation>
    <location>
        <position position="385"/>
    </location>
</feature>
<feature type="sequence conflict" description="In Ref. 2; BAC11535." evidence="9" ref="2">
    <original>D</original>
    <variation>N</variation>
    <location>
        <position position="318"/>
    </location>
</feature>
<feature type="sequence conflict" description="In Ref. 2; BAC11535." evidence="9" ref="2">
    <original>A</original>
    <variation>V</variation>
    <location>
        <position position="435"/>
    </location>
</feature>
<dbReference type="EMBL" id="AF241373">
    <property type="protein sequence ID" value="AAF62542.1"/>
    <property type="molecule type" value="Genomic_DNA"/>
</dbReference>
<dbReference type="EMBL" id="AF241367">
    <property type="protein sequence ID" value="AAF62542.1"/>
    <property type="status" value="JOINED"/>
    <property type="molecule type" value="Genomic_DNA"/>
</dbReference>
<dbReference type="EMBL" id="AF241368">
    <property type="protein sequence ID" value="AAF62542.1"/>
    <property type="status" value="JOINED"/>
    <property type="molecule type" value="Genomic_DNA"/>
</dbReference>
<dbReference type="EMBL" id="AF241369">
    <property type="protein sequence ID" value="AAF62542.1"/>
    <property type="status" value="JOINED"/>
    <property type="molecule type" value="Genomic_DNA"/>
</dbReference>
<dbReference type="EMBL" id="AF241370">
    <property type="protein sequence ID" value="AAF62542.1"/>
    <property type="status" value="JOINED"/>
    <property type="molecule type" value="Genomic_DNA"/>
</dbReference>
<dbReference type="EMBL" id="AF241371">
    <property type="protein sequence ID" value="AAF62542.1"/>
    <property type="status" value="JOINED"/>
    <property type="molecule type" value="Genomic_DNA"/>
</dbReference>
<dbReference type="EMBL" id="AF241372">
    <property type="protein sequence ID" value="AAF62542.1"/>
    <property type="status" value="JOINED"/>
    <property type="molecule type" value="Genomic_DNA"/>
</dbReference>
<dbReference type="EMBL" id="AK075302">
    <property type="protein sequence ID" value="BAC11535.1"/>
    <property type="molecule type" value="mRNA"/>
</dbReference>
<dbReference type="EMBL" id="AC011500">
    <property type="status" value="NOT_ANNOTATED_CDS"/>
    <property type="molecule type" value="Genomic_DNA"/>
</dbReference>
<dbReference type="EMBL" id="BC000218">
    <property type="protein sequence ID" value="AAH00218.1"/>
    <property type="molecule type" value="mRNA"/>
</dbReference>
<dbReference type="CCDS" id="CCDS12537.1">
    <molecule id="Q9NYJ7-2"/>
</dbReference>
<dbReference type="CCDS" id="CCDS12538.1">
    <molecule id="Q9NYJ7-1"/>
</dbReference>
<dbReference type="RefSeq" id="NP_058637.1">
    <molecule id="Q9NYJ7-1"/>
    <property type="nucleotide sequence ID" value="NM_016941.4"/>
</dbReference>
<dbReference type="RefSeq" id="NP_982353.1">
    <molecule id="Q9NYJ7-2"/>
    <property type="nucleotide sequence ID" value="NM_203486.3"/>
</dbReference>
<dbReference type="SMR" id="Q9NYJ7"/>
<dbReference type="BioGRID" id="115922">
    <property type="interactions" value="17"/>
</dbReference>
<dbReference type="FunCoup" id="Q9NYJ7">
    <property type="interactions" value="333"/>
</dbReference>
<dbReference type="IntAct" id="Q9NYJ7">
    <property type="interactions" value="5"/>
</dbReference>
<dbReference type="STRING" id="9606.ENSP00000205143"/>
<dbReference type="ChEMBL" id="CHEMBL4630888"/>
<dbReference type="DrugBank" id="DB17256">
    <property type="generic name" value="Tarlatamab"/>
</dbReference>
<dbReference type="iPTMnet" id="Q9NYJ7"/>
<dbReference type="PhosphoSitePlus" id="Q9NYJ7"/>
<dbReference type="BioMuta" id="DLL3"/>
<dbReference type="DMDM" id="12229810"/>
<dbReference type="MassIVE" id="Q9NYJ7"/>
<dbReference type="PaxDb" id="9606-ENSP00000205143"/>
<dbReference type="PeptideAtlas" id="Q9NYJ7"/>
<dbReference type="ProteomicsDB" id="20096"/>
<dbReference type="ProteomicsDB" id="83237">
    <molecule id="Q9NYJ7-1"/>
</dbReference>
<dbReference type="ABCD" id="Q9NYJ7">
    <property type="antibodies" value="536 sequenced antibodies"/>
</dbReference>
<dbReference type="Antibodypedia" id="30387">
    <property type="antibodies" value="601 antibodies from 33 providers"/>
</dbReference>
<dbReference type="DNASU" id="10683"/>
<dbReference type="Ensembl" id="ENST00000205143.4">
    <molecule id="Q9NYJ7-1"/>
    <property type="protein sequence ID" value="ENSP00000205143.3"/>
    <property type="gene ID" value="ENSG00000090932.11"/>
</dbReference>
<dbReference type="Ensembl" id="ENST00000356433.10">
    <molecule id="Q9NYJ7-2"/>
    <property type="protein sequence ID" value="ENSP00000348810.4"/>
    <property type="gene ID" value="ENSG00000090932.11"/>
</dbReference>
<dbReference type="GeneID" id="10683"/>
<dbReference type="KEGG" id="hsa:10683"/>
<dbReference type="MANE-Select" id="ENST00000356433.10">
    <molecule id="Q9NYJ7-2"/>
    <property type="protein sequence ID" value="ENSP00000348810.4"/>
    <property type="RefSeq nucleotide sequence ID" value="NM_203486.3"/>
    <property type="RefSeq protein sequence ID" value="NP_982353.1"/>
</dbReference>
<dbReference type="UCSC" id="uc002olw.3">
    <molecule id="Q9NYJ7-1"/>
    <property type="organism name" value="human"/>
</dbReference>
<dbReference type="AGR" id="HGNC:2909"/>
<dbReference type="CTD" id="10683"/>
<dbReference type="DisGeNET" id="10683"/>
<dbReference type="GeneCards" id="DLL3"/>
<dbReference type="GeneReviews" id="DLL3"/>
<dbReference type="HGNC" id="HGNC:2909">
    <property type="gene designation" value="DLL3"/>
</dbReference>
<dbReference type="HPA" id="ENSG00000090932">
    <property type="expression patterns" value="Tissue enriched (brain)"/>
</dbReference>
<dbReference type="MalaCards" id="DLL3"/>
<dbReference type="MIM" id="277300">
    <property type="type" value="phenotype"/>
</dbReference>
<dbReference type="MIM" id="602768">
    <property type="type" value="gene"/>
</dbReference>
<dbReference type="neXtProt" id="NX_Q9NYJ7"/>
<dbReference type="OpenTargets" id="ENSG00000090932"/>
<dbReference type="Orphanet" id="2311">
    <property type="disease" value="Autosomal recessive spondylocostal dysostosis"/>
</dbReference>
<dbReference type="PharmGKB" id="PA27365"/>
<dbReference type="VEuPathDB" id="HostDB:ENSG00000090932"/>
<dbReference type="eggNOG" id="KOG1217">
    <property type="taxonomic scope" value="Eukaryota"/>
</dbReference>
<dbReference type="GeneTree" id="ENSGT00940000162127"/>
<dbReference type="HOGENOM" id="CLU_033244_0_0_1"/>
<dbReference type="InParanoid" id="Q9NYJ7"/>
<dbReference type="OMA" id="WSHPEDG"/>
<dbReference type="OrthoDB" id="283575at2759"/>
<dbReference type="PAN-GO" id="Q9NYJ7">
    <property type="GO annotations" value="1 GO annotation based on evolutionary models"/>
</dbReference>
<dbReference type="PhylomeDB" id="Q9NYJ7"/>
<dbReference type="TreeFam" id="TF351835"/>
<dbReference type="PathwayCommons" id="Q9NYJ7"/>
<dbReference type="Reactome" id="R-HSA-9793380">
    <property type="pathway name" value="Formation of paraxial mesoderm"/>
</dbReference>
<dbReference type="Reactome" id="R-HSA-9824272">
    <property type="pathway name" value="Somitogenesis"/>
</dbReference>
<dbReference type="SignaLink" id="Q9NYJ7"/>
<dbReference type="SIGNOR" id="Q9NYJ7"/>
<dbReference type="BioGRID-ORCS" id="10683">
    <property type="hits" value="22 hits in 1150 CRISPR screens"/>
</dbReference>
<dbReference type="ChiTaRS" id="DLL3">
    <property type="organism name" value="human"/>
</dbReference>
<dbReference type="GeneWiki" id="DLL3"/>
<dbReference type="GenomeRNAi" id="10683"/>
<dbReference type="Pharos" id="Q9NYJ7">
    <property type="development level" value="Tbio"/>
</dbReference>
<dbReference type="PRO" id="PR:Q9NYJ7"/>
<dbReference type="Proteomes" id="UP000005640">
    <property type="component" value="Chromosome 19"/>
</dbReference>
<dbReference type="RNAct" id="Q9NYJ7">
    <property type="molecule type" value="protein"/>
</dbReference>
<dbReference type="Bgee" id="ENSG00000090932">
    <property type="expression patterns" value="Expressed in ganglionic eminence and 40 other cell types or tissues"/>
</dbReference>
<dbReference type="ExpressionAtlas" id="Q9NYJ7">
    <property type="expression patterns" value="baseline and differential"/>
</dbReference>
<dbReference type="GO" id="GO:0016020">
    <property type="term" value="C:membrane"/>
    <property type="evidence" value="ECO:0000303"/>
    <property type="project" value="UniProtKB"/>
</dbReference>
<dbReference type="GO" id="GO:0005886">
    <property type="term" value="C:plasma membrane"/>
    <property type="evidence" value="ECO:0000318"/>
    <property type="project" value="GO_Central"/>
</dbReference>
<dbReference type="GO" id="GO:0005509">
    <property type="term" value="F:calcium ion binding"/>
    <property type="evidence" value="ECO:0007669"/>
    <property type="project" value="InterPro"/>
</dbReference>
<dbReference type="GO" id="GO:0005112">
    <property type="term" value="F:Notch binding"/>
    <property type="evidence" value="ECO:0000318"/>
    <property type="project" value="GO_Central"/>
</dbReference>
<dbReference type="GO" id="GO:0030154">
    <property type="term" value="P:cell differentiation"/>
    <property type="evidence" value="ECO:0007669"/>
    <property type="project" value="UniProtKB-KW"/>
</dbReference>
<dbReference type="GO" id="GO:0007386">
    <property type="term" value="P:compartment pattern specification"/>
    <property type="evidence" value="ECO:0007669"/>
    <property type="project" value="Ensembl"/>
</dbReference>
<dbReference type="GO" id="GO:0050768">
    <property type="term" value="P:negative regulation of neurogenesis"/>
    <property type="evidence" value="ECO:0007669"/>
    <property type="project" value="Ensembl"/>
</dbReference>
<dbReference type="GO" id="GO:0045746">
    <property type="term" value="P:negative regulation of Notch signaling pathway"/>
    <property type="evidence" value="ECO:0000318"/>
    <property type="project" value="GO_Central"/>
</dbReference>
<dbReference type="GO" id="GO:0007219">
    <property type="term" value="P:Notch signaling pathway"/>
    <property type="evidence" value="ECO:0000318"/>
    <property type="project" value="GO_Central"/>
</dbReference>
<dbReference type="GO" id="GO:0048339">
    <property type="term" value="P:paraxial mesoderm development"/>
    <property type="evidence" value="ECO:0007669"/>
    <property type="project" value="Ensembl"/>
</dbReference>
<dbReference type="GO" id="GO:0001501">
    <property type="term" value="P:skeletal system development"/>
    <property type="evidence" value="ECO:0000315"/>
    <property type="project" value="UniProtKB"/>
</dbReference>
<dbReference type="GO" id="GO:0001756">
    <property type="term" value="P:somitogenesis"/>
    <property type="evidence" value="ECO:0007669"/>
    <property type="project" value="Ensembl"/>
</dbReference>
<dbReference type="CDD" id="cd00054">
    <property type="entry name" value="EGF_CA"/>
    <property type="match status" value="5"/>
</dbReference>
<dbReference type="FunFam" id="2.10.25.10:FF:000368">
    <property type="entry name" value="Delta-like 3 (Drosophila), isoform CRA_b"/>
    <property type="match status" value="1"/>
</dbReference>
<dbReference type="FunFam" id="2.10.25.10:FF:000403">
    <property type="entry name" value="Delta-like 3 (Drosophila), isoform CRA_b"/>
    <property type="match status" value="1"/>
</dbReference>
<dbReference type="FunFam" id="2.10.25.10:FF:000432">
    <property type="entry name" value="Delta-like 3 (Drosophila), isoform CRA_b"/>
    <property type="match status" value="1"/>
</dbReference>
<dbReference type="FunFam" id="2.10.25.10:FF:000585">
    <property type="entry name" value="Delta-like 3 (Drosophila), isoform CRA_b"/>
    <property type="match status" value="1"/>
</dbReference>
<dbReference type="FunFam" id="2.60.40.3510:FF:000005">
    <property type="entry name" value="Delta-like 3 (Drosophila), isoform CRA_b"/>
    <property type="match status" value="1"/>
</dbReference>
<dbReference type="FunFam" id="2.10.25.10:FF:000347">
    <property type="entry name" value="delta-like protein 3"/>
    <property type="match status" value="1"/>
</dbReference>
<dbReference type="FunFam" id="2.10.25.10:FF:000066">
    <property type="entry name" value="FAT atypical cadherin 4"/>
    <property type="match status" value="1"/>
</dbReference>
<dbReference type="Gene3D" id="2.60.40.3510">
    <property type="match status" value="1"/>
</dbReference>
<dbReference type="Gene3D" id="2.10.25.10">
    <property type="entry name" value="Laminin"/>
    <property type="match status" value="6"/>
</dbReference>
<dbReference type="InterPro" id="IPR001881">
    <property type="entry name" value="EGF-like_Ca-bd_dom"/>
</dbReference>
<dbReference type="InterPro" id="IPR013032">
    <property type="entry name" value="EGF-like_CS"/>
</dbReference>
<dbReference type="InterPro" id="IPR000742">
    <property type="entry name" value="EGF-like_dom"/>
</dbReference>
<dbReference type="InterPro" id="IPR009030">
    <property type="entry name" value="Growth_fac_rcpt_cys_sf"/>
</dbReference>
<dbReference type="InterPro" id="IPR051022">
    <property type="entry name" value="Notch_Cell-Fate_Det"/>
</dbReference>
<dbReference type="InterPro" id="IPR011651">
    <property type="entry name" value="Notch_ligand_N"/>
</dbReference>
<dbReference type="PANTHER" id="PTHR24049">
    <property type="entry name" value="CRUMBS FAMILY MEMBER"/>
    <property type="match status" value="1"/>
</dbReference>
<dbReference type="PANTHER" id="PTHR24049:SF22">
    <property type="entry name" value="DROSOPHILA CRUMBS HOMOLOG"/>
    <property type="match status" value="1"/>
</dbReference>
<dbReference type="Pfam" id="PF00008">
    <property type="entry name" value="EGF"/>
    <property type="match status" value="4"/>
</dbReference>
<dbReference type="Pfam" id="PF12661">
    <property type="entry name" value="hEGF"/>
    <property type="match status" value="1"/>
</dbReference>
<dbReference type="Pfam" id="PF07657">
    <property type="entry name" value="MNNL"/>
    <property type="match status" value="1"/>
</dbReference>
<dbReference type="PRINTS" id="PR00010">
    <property type="entry name" value="EGFBLOOD"/>
</dbReference>
<dbReference type="SMART" id="SM00181">
    <property type="entry name" value="EGF"/>
    <property type="match status" value="6"/>
</dbReference>
<dbReference type="SMART" id="SM00179">
    <property type="entry name" value="EGF_CA"/>
    <property type="match status" value="5"/>
</dbReference>
<dbReference type="SUPFAM" id="SSF57196">
    <property type="entry name" value="EGF/Laminin"/>
    <property type="match status" value="2"/>
</dbReference>
<dbReference type="SUPFAM" id="SSF57184">
    <property type="entry name" value="Growth factor receptor domain"/>
    <property type="match status" value="1"/>
</dbReference>
<dbReference type="PROSITE" id="PS00022">
    <property type="entry name" value="EGF_1"/>
    <property type="match status" value="6"/>
</dbReference>
<dbReference type="PROSITE" id="PS01186">
    <property type="entry name" value="EGF_2"/>
    <property type="match status" value="6"/>
</dbReference>
<dbReference type="PROSITE" id="PS50026">
    <property type="entry name" value="EGF_3"/>
    <property type="match status" value="6"/>
</dbReference>
<proteinExistence type="evidence at protein level"/>
<reference key="1">
    <citation type="journal article" date="2000" name="Nat. Genet.">
        <title>Mutations in the human delta homologue, DLL3, cause axial skeletal defects in spondylocostal dysostosis.</title>
        <authorList>
            <person name="Bulman M.P."/>
            <person name="Kusumi K."/>
            <person name="Frayling T.M."/>
            <person name="McKeown C."/>
            <person name="Garrett C."/>
            <person name="Lander E.S."/>
            <person name="Krumlauf R."/>
            <person name="Hattersley A.T."/>
            <person name="Ellard S."/>
            <person name="Turnpenny P.D."/>
        </authorList>
    </citation>
    <scope>NUCLEOTIDE SEQUENCE [GENOMIC DNA / MRNA] (ISOFORM 1)</scope>
    <scope>VARIANT SCDO1 ASP-385</scope>
</reference>
<reference key="2">
    <citation type="journal article" date="2005" name="DNA Res.">
        <title>Signal sequence and keyword trap in silico for selection of full-length human cDNAs encoding secretion or membrane proteins from oligo-capped cDNA libraries.</title>
        <authorList>
            <person name="Otsuki T."/>
            <person name="Ota T."/>
            <person name="Nishikawa T."/>
            <person name="Hayashi K."/>
            <person name="Suzuki Y."/>
            <person name="Yamamoto J."/>
            <person name="Wakamatsu A."/>
            <person name="Kimura K."/>
            <person name="Sakamoto K."/>
            <person name="Hatano N."/>
            <person name="Kawai Y."/>
            <person name="Ishii S."/>
            <person name="Saito K."/>
            <person name="Kojima S."/>
            <person name="Sugiyama T."/>
            <person name="Ono T."/>
            <person name="Okano K."/>
            <person name="Yoshikawa Y."/>
            <person name="Aotsuka S."/>
            <person name="Sasaki N."/>
            <person name="Hattori A."/>
            <person name="Okumura K."/>
            <person name="Nagai K."/>
            <person name="Sugano S."/>
            <person name="Isogai T."/>
        </authorList>
    </citation>
    <scope>NUCLEOTIDE SEQUENCE [LARGE SCALE MRNA] (ISOFORM 2)</scope>
    <scope>VARIANTS CYS-172 AND PRO-218</scope>
</reference>
<reference key="3">
    <citation type="journal article" date="2004" name="Nature">
        <title>The DNA sequence and biology of human chromosome 19.</title>
        <authorList>
            <person name="Grimwood J."/>
            <person name="Gordon L.A."/>
            <person name="Olsen A.S."/>
            <person name="Terry A."/>
            <person name="Schmutz J."/>
            <person name="Lamerdin J.E."/>
            <person name="Hellsten U."/>
            <person name="Goodstein D."/>
            <person name="Couronne O."/>
            <person name="Tran-Gyamfi M."/>
            <person name="Aerts A."/>
            <person name="Altherr M."/>
            <person name="Ashworth L."/>
            <person name="Bajorek E."/>
            <person name="Black S."/>
            <person name="Branscomb E."/>
            <person name="Caenepeel S."/>
            <person name="Carrano A.V."/>
            <person name="Caoile C."/>
            <person name="Chan Y.M."/>
            <person name="Christensen M."/>
            <person name="Cleland C.A."/>
            <person name="Copeland A."/>
            <person name="Dalin E."/>
            <person name="Dehal P."/>
            <person name="Denys M."/>
            <person name="Detter J.C."/>
            <person name="Escobar J."/>
            <person name="Flowers D."/>
            <person name="Fotopulos D."/>
            <person name="Garcia C."/>
            <person name="Georgescu A.M."/>
            <person name="Glavina T."/>
            <person name="Gomez M."/>
            <person name="Gonzales E."/>
            <person name="Groza M."/>
            <person name="Hammon N."/>
            <person name="Hawkins T."/>
            <person name="Haydu L."/>
            <person name="Ho I."/>
            <person name="Huang W."/>
            <person name="Israni S."/>
            <person name="Jett J."/>
            <person name="Kadner K."/>
            <person name="Kimball H."/>
            <person name="Kobayashi A."/>
            <person name="Larionov V."/>
            <person name="Leem S.-H."/>
            <person name="Lopez F."/>
            <person name="Lou Y."/>
            <person name="Lowry S."/>
            <person name="Malfatti S."/>
            <person name="Martinez D."/>
            <person name="McCready P.M."/>
            <person name="Medina C."/>
            <person name="Morgan J."/>
            <person name="Nelson K."/>
            <person name="Nolan M."/>
            <person name="Ovcharenko I."/>
            <person name="Pitluck S."/>
            <person name="Pollard M."/>
            <person name="Popkie A.P."/>
            <person name="Predki P."/>
            <person name="Quan G."/>
            <person name="Ramirez L."/>
            <person name="Rash S."/>
            <person name="Retterer J."/>
            <person name="Rodriguez A."/>
            <person name="Rogers S."/>
            <person name="Salamov A."/>
            <person name="Salazar A."/>
            <person name="She X."/>
            <person name="Smith D."/>
            <person name="Slezak T."/>
            <person name="Solovyev V."/>
            <person name="Thayer N."/>
            <person name="Tice H."/>
            <person name="Tsai M."/>
            <person name="Ustaszewska A."/>
            <person name="Vo N."/>
            <person name="Wagner M."/>
            <person name="Wheeler J."/>
            <person name="Wu K."/>
            <person name="Xie G."/>
            <person name="Yang J."/>
            <person name="Dubchak I."/>
            <person name="Furey T.S."/>
            <person name="DeJong P."/>
            <person name="Dickson M."/>
            <person name="Gordon D."/>
            <person name="Eichler E.E."/>
            <person name="Pennacchio L.A."/>
            <person name="Richardson P."/>
            <person name="Stubbs L."/>
            <person name="Rokhsar D.S."/>
            <person name="Myers R.M."/>
            <person name="Rubin E.M."/>
            <person name="Lucas S.M."/>
        </authorList>
    </citation>
    <scope>NUCLEOTIDE SEQUENCE [LARGE SCALE GENOMIC DNA]</scope>
</reference>
<reference key="4">
    <citation type="journal article" date="2004" name="Genome Res.">
        <title>The status, quality, and expansion of the NIH full-length cDNA project: the Mammalian Gene Collection (MGC).</title>
        <authorList>
            <consortium name="The MGC Project Team"/>
        </authorList>
    </citation>
    <scope>NUCLEOTIDE SEQUENCE [LARGE SCALE MRNA] (ISOFORM 1)</scope>
    <source>
        <tissue>Brain</tissue>
    </source>
</reference>
<reference key="5">
    <citation type="journal article" date="2008" name="Am. J. Hum. Genet.">
        <title>Mutations in the MESP2 gene cause spondylothoracic dysostosis/Jarcho-Levin syndrome.</title>
        <authorList>
            <person name="Cornier A.S."/>
            <person name="Staehling-Hampton K."/>
            <person name="Delventhal K.M."/>
            <person name="Saga Y."/>
            <person name="Caubet J.-F."/>
            <person name="Sasaki N."/>
            <person name="Ellard S."/>
            <person name="Young E."/>
            <person name="Ramirez N."/>
            <person name="Carlo S.E."/>
            <person name="Torres J."/>
            <person name="Emans J.B."/>
            <person name="Turnpenny P.D."/>
            <person name="Pourquie O."/>
        </authorList>
    </citation>
    <scope>VARIANTS THR-115; GLN-142; CYS-172 AND PRO-218</scope>
</reference>
<name>DLL3_HUMAN</name>
<protein>
    <recommendedName>
        <fullName>Delta-like protein 3</fullName>
    </recommendedName>
    <alternativeName>
        <fullName>Drosophila Delta homolog 3</fullName>
        <shortName>Delta3</shortName>
    </alternativeName>
</protein>
<comment type="function">
    <text evidence="1">Inhibits primary neurogenesis. May be required to divert neurons along a specific differentiation pathway. Plays a role in the formation of somite boundaries during segmentation of the paraxial mesoderm (By similarity).</text>
</comment>
<comment type="subunit">
    <text evidence="1">Can bind and activate Notch-1 or another Notch receptor.</text>
</comment>
<comment type="subcellular location">
    <subcellularLocation>
        <location evidence="9">Membrane</location>
        <topology evidence="9">Single-pass type I membrane protein</topology>
    </subcellularLocation>
</comment>
<comment type="alternative products">
    <event type="alternative splicing"/>
    <isoform>
        <id>Q9NYJ7-1</id>
        <name>1</name>
        <sequence type="displayed"/>
    </isoform>
    <isoform>
        <id>Q9NYJ7-2</id>
        <name>2</name>
        <sequence type="described" ref="VSP_045249"/>
    </isoform>
</comment>
<comment type="domain">
    <text>The DSL domain is required for binding to the Notch receptor.</text>
</comment>
<comment type="PTM">
    <text evidence="1">Ubiquitinated by MIB (MIB1 or MIB2), leading to its endocytosis and subsequent degradation.</text>
</comment>
<comment type="disease" evidence="5">
    <disease id="DI-01081">
        <name>Spondylocostal dysostosis 1, autosomal recessive</name>
        <acronym>SCDO1</acronym>
        <description>A condition of variable severity associated with vertebral and rib segmentation defects. The main skeletal malformations include fusion of vertebrae, hemivertebrae, fusion of certain ribs, and other rib malformations. Deformity of the chest and spine (severe scoliosis, kyphoscoliosis and lordosis) is a natural consequence of the malformation and leads to a dwarf-like appearance. As the thorax is small, infants frequently have respiratory insufficiency and repeated respiratory infections resulting in life-threatening complications in the first year of life.</description>
        <dbReference type="MIM" id="277300"/>
    </disease>
    <text>The disease is caused by variants affecting the gene represented in this entry.</text>
</comment>
<gene>
    <name type="primary">DLL3</name>
</gene>
<evidence type="ECO:0000250" key="1"/>
<evidence type="ECO:0000255" key="2"/>
<evidence type="ECO:0000255" key="3">
    <source>
        <dbReference type="PROSITE-ProRule" id="PRU00076"/>
    </source>
</evidence>
<evidence type="ECO:0000256" key="4">
    <source>
        <dbReference type="SAM" id="MobiDB-lite"/>
    </source>
</evidence>
<evidence type="ECO:0000269" key="5">
    <source>
    </source>
</evidence>
<evidence type="ECO:0000269" key="6">
    <source>
    </source>
</evidence>
<evidence type="ECO:0000269" key="7">
    <source>
    </source>
</evidence>
<evidence type="ECO:0000303" key="8">
    <source>
    </source>
</evidence>
<evidence type="ECO:0000305" key="9"/>
<accession>Q9NYJ7</accession>
<accession>E9PFG2</accession>
<accession>Q8NBS4</accession>
<organism>
    <name type="scientific">Homo sapiens</name>
    <name type="common">Human</name>
    <dbReference type="NCBI Taxonomy" id="9606"/>
    <lineage>
        <taxon>Eukaryota</taxon>
        <taxon>Metazoa</taxon>
        <taxon>Chordata</taxon>
        <taxon>Craniata</taxon>
        <taxon>Vertebrata</taxon>
        <taxon>Euteleostomi</taxon>
        <taxon>Mammalia</taxon>
        <taxon>Eutheria</taxon>
        <taxon>Euarchontoglires</taxon>
        <taxon>Primates</taxon>
        <taxon>Haplorrhini</taxon>
        <taxon>Catarrhini</taxon>
        <taxon>Hominidae</taxon>
        <taxon>Homo</taxon>
    </lineage>
</organism>
<keyword id="KW-0025">Alternative splicing</keyword>
<keyword id="KW-0217">Developmental protein</keyword>
<keyword id="KW-0221">Differentiation</keyword>
<keyword id="KW-0225">Disease variant</keyword>
<keyword id="KW-1015">Disulfide bond</keyword>
<keyword id="KW-0242">Dwarfism</keyword>
<keyword id="KW-0245">EGF-like domain</keyword>
<keyword id="KW-0472">Membrane</keyword>
<keyword id="KW-0914">Notch signaling pathway</keyword>
<keyword id="KW-1267">Proteomics identification</keyword>
<keyword id="KW-1185">Reference proteome</keyword>
<keyword id="KW-0677">Repeat</keyword>
<keyword id="KW-0732">Signal</keyword>
<keyword id="KW-0812">Transmembrane</keyword>
<keyword id="KW-1133">Transmembrane helix</keyword>
<keyword id="KW-0832">Ubl conjugation</keyword>